<proteinExistence type="evidence at protein level"/>
<name>DHYS_HUMAN</name>
<organism>
    <name type="scientific">Homo sapiens</name>
    <name type="common">Human</name>
    <dbReference type="NCBI Taxonomy" id="9606"/>
    <lineage>
        <taxon>Eukaryota</taxon>
        <taxon>Metazoa</taxon>
        <taxon>Chordata</taxon>
        <taxon>Craniata</taxon>
        <taxon>Vertebrata</taxon>
        <taxon>Euteleostomi</taxon>
        <taxon>Mammalia</taxon>
        <taxon>Eutheria</taxon>
        <taxon>Euarchontoglires</taxon>
        <taxon>Primates</taxon>
        <taxon>Haplorrhini</taxon>
        <taxon>Catarrhini</taxon>
        <taxon>Hominidae</taxon>
        <taxon>Homo</taxon>
    </lineage>
</organism>
<comment type="function">
    <text evidence="3">Catalyzes the NAD-dependent oxidative cleavage of spermidine and the subsequent transfer of the butylamine moiety of spermidine to the epsilon-amino group of a critical lysine residue of the eIF-5A precursor protein to form the intermediate deoxyhypusine residue (PubMed:30661771). This is the first step of the post-translational modification of that lysine into an unusual amino acid residue named hypusine. Hypusination is unique to mature eIF-5A factor and is essential for its function.</text>
</comment>
<comment type="catalytic activity">
    <reaction evidence="3">
        <text>[eIF5A protein]-L-lysine + spermidine = [eIF5A protein]-deoxyhypusine + propane-1,3-diamine</text>
        <dbReference type="Rhea" id="RHEA:33299"/>
        <dbReference type="Rhea" id="RHEA-COMP:10143"/>
        <dbReference type="Rhea" id="RHEA-COMP:10144"/>
        <dbReference type="ChEBI" id="CHEBI:29969"/>
        <dbReference type="ChEBI" id="CHEBI:57484"/>
        <dbReference type="ChEBI" id="CHEBI:57834"/>
        <dbReference type="ChEBI" id="CHEBI:82657"/>
        <dbReference type="EC" id="2.5.1.46"/>
    </reaction>
</comment>
<comment type="cofactor">
    <cofactor>
        <name>NAD(+)</name>
        <dbReference type="ChEBI" id="CHEBI:57540"/>
    </cofactor>
</comment>
<comment type="pathway">
    <text evidence="3">Protein modification; eIF5A hypusination.</text>
</comment>
<comment type="subunit">
    <text evidence="2 4 5">Homotetramer formed by a dimer of dimers.</text>
</comment>
<comment type="interaction">
    <interactant intactId="EBI-741925">
        <id>P49366</id>
    </interactant>
    <interactant intactId="EBI-2602539">
        <id>Q53QZ3</id>
        <label>ARHGAP15</label>
    </interactant>
    <organismsDiffer>false</organismsDiffer>
    <experiments>2</experiments>
</comment>
<comment type="interaction">
    <interactant intactId="EBI-741925">
        <id>P49366</id>
    </interactant>
    <interactant intactId="EBI-741925">
        <id>P49366</id>
        <label>DHPS</label>
    </interactant>
    <organismsDiffer>false</organismsDiffer>
    <experiments>4</experiments>
</comment>
<comment type="interaction">
    <interactant intactId="EBI-741925">
        <id>P49366</id>
    </interactant>
    <interactant intactId="EBI-373150">
        <id>P63241</id>
        <label>EIF5A</label>
    </interactant>
    <organismsDiffer>false</organismsDiffer>
    <experiments>6</experiments>
</comment>
<comment type="interaction">
    <interactant intactId="EBI-741925">
        <id>P49366</id>
    </interactant>
    <interactant intactId="EBI-748028">
        <id>Q9GZV4</id>
        <label>EIF5A2</label>
    </interactant>
    <organismsDiffer>false</organismsDiffer>
    <experiments>9</experiments>
</comment>
<comment type="interaction">
    <interactant intactId="EBI-741925">
        <id>P49366</id>
    </interactant>
    <interactant intactId="EBI-739832">
        <id>Q8TBB1</id>
        <label>LNX1</label>
    </interactant>
    <organismsDiffer>false</organismsDiffer>
    <experiments>3</experiments>
</comment>
<comment type="interaction">
    <interactant intactId="EBI-741925">
        <id>P49366</id>
    </interactant>
    <interactant intactId="EBI-73995">
        <id>P27361</id>
        <label>MAPK3</label>
    </interactant>
    <organismsDiffer>false</organismsDiffer>
    <experiments>10</experiments>
</comment>
<comment type="interaction">
    <interactant intactId="EBI-741925">
        <id>P49366</id>
    </interactant>
    <interactant intactId="EBI-16439278">
        <id>Q6FHY5</id>
        <label>MEOX2</label>
    </interactant>
    <organismsDiffer>false</organismsDiffer>
    <experiments>3</experiments>
</comment>
<comment type="interaction">
    <interactant intactId="EBI-741925">
        <id>P49366</id>
    </interactant>
    <interactant intactId="EBI-740897">
        <id>Q9GZT8</id>
        <label>NIF3L1</label>
    </interactant>
    <organismsDiffer>false</organismsDiffer>
    <experiments>3</experiments>
</comment>
<comment type="interaction">
    <interactant intactId="EBI-741925">
        <id>P49366</id>
    </interactant>
    <interactant intactId="EBI-741158">
        <id>Q96HA8</id>
        <label>NTAQ1</label>
    </interactant>
    <organismsDiffer>false</organismsDiffer>
    <experiments>3</experiments>
</comment>
<comment type="interaction">
    <interactant intactId="EBI-741925">
        <id>P49366</id>
    </interactant>
    <interactant intactId="EBI-740486">
        <id>Q6ZVK8</id>
        <label>NUDT18</label>
    </interactant>
    <organismsDiffer>false</organismsDiffer>
    <experiments>3</experiments>
</comment>
<comment type="interaction">
    <interactant intactId="EBI-741925">
        <id>P49366</id>
    </interactant>
    <interactant intactId="EBI-747278">
        <id>P26367</id>
        <label>PAX6</label>
    </interactant>
    <organismsDiffer>false</organismsDiffer>
    <experiments>3</experiments>
</comment>
<comment type="interaction">
    <interactant intactId="EBI-741925">
        <id>P49366</id>
    </interactant>
    <interactant intactId="EBI-1267176">
        <id>Q9HD43</id>
        <label>PTPRH</label>
    </interactant>
    <organismsDiffer>false</organismsDiffer>
    <experiments>3</experiments>
</comment>
<comment type="interaction">
    <interactant intactId="EBI-741925">
        <id>P49366</id>
    </interactant>
    <interactant intactId="EBI-10179046">
        <id>O00194</id>
        <label>RAB27B</label>
    </interactant>
    <organismsDiffer>false</organismsDiffer>
    <experiments>6</experiments>
</comment>
<comment type="interaction">
    <interactant intactId="EBI-741925">
        <id>P49366</id>
    </interactant>
    <interactant intactId="EBI-2623483">
        <id>P09455</id>
        <label>RBP1</label>
    </interactant>
    <organismsDiffer>false</organismsDiffer>
    <experiments>3</experiments>
</comment>
<comment type="interaction">
    <interactant intactId="EBI-741925">
        <id>P49366</id>
    </interactant>
    <interactant intactId="EBI-307352">
        <id>Q04864</id>
        <label>REL</label>
    </interactant>
    <organismsDiffer>false</organismsDiffer>
    <experiments>3</experiments>
</comment>
<comment type="interaction">
    <interactant intactId="EBI-741925">
        <id>P49366</id>
    </interactant>
    <interactant intactId="EBI-10829018">
        <id>Q04864-2</id>
        <label>REL</label>
    </interactant>
    <organismsDiffer>false</organismsDiffer>
    <experiments>3</experiments>
</comment>
<comment type="interaction">
    <interactant intactId="EBI-741925">
        <id>P49366</id>
    </interactant>
    <interactant intactId="EBI-358122">
        <id>P32969</id>
        <label>RPL9P9</label>
    </interactant>
    <organismsDiffer>false</organismsDiffer>
    <experiments>12</experiments>
</comment>
<comment type="interaction">
    <interactant intactId="EBI-741925">
        <id>P49366</id>
    </interactant>
    <interactant intactId="EBI-10256546">
        <id>Q7L8A9</id>
        <label>VASH1</label>
    </interactant>
    <organismsDiffer>false</organismsDiffer>
    <experiments>3</experiments>
</comment>
<comment type="interaction">
    <interactant intactId="EBI-741925">
        <id>P49366</id>
    </interactant>
    <interactant intactId="EBI-10746567">
        <id>P52744</id>
        <label>ZNF138</label>
    </interactant>
    <organismsDiffer>false</organismsDiffer>
    <experiments>3</experiments>
</comment>
<comment type="interaction">
    <interactant intactId="EBI-741925">
        <id>P49366</id>
    </interactant>
    <interactant intactId="EBI-10213071">
        <id>P52744-2</id>
        <label>ZNF138</label>
    </interactant>
    <organismsDiffer>false</organismsDiffer>
    <experiments>3</experiments>
</comment>
<comment type="alternative products">
    <event type="alternative splicing"/>
    <isoform>
        <id>P49366-1</id>
        <name>Long</name>
        <sequence type="displayed"/>
    </isoform>
    <isoform>
        <id>P49366-2</id>
        <name>Short</name>
        <sequence type="described" ref="VSP_001351"/>
    </isoform>
    <isoform>
        <id>P49366-3</id>
        <name>3</name>
        <sequence type="described" ref="VSP_047564"/>
    </isoform>
</comment>
<comment type="disease" evidence="3">
    <disease id="DI-05598">
        <name>Neurodevelopmental disorder with seizures and speech and walking impairment</name>
        <acronym>NEDSSWI</acronym>
        <description>An autosomal recessive disorder characterized by global developmental delay with intellectual disability and poor speech acquisition, and walking difficulties due to hypotonia, hypertonia, spasticity, or poor coordination. Additional features include seizures, mild dysmorphic features, and variable short stature.</description>
        <dbReference type="MIM" id="618480"/>
    </disease>
    <text>The disease is caused by variants affecting the gene represented in this entry.</text>
</comment>
<comment type="miscellaneous">
    <molecule>Isoform Short</molecule>
    <text evidence="8">Inactive.</text>
</comment>
<comment type="similarity">
    <text evidence="8">Belongs to the deoxyhypusine synthase family.</text>
</comment>
<comment type="sequence caution" evidence="8">
    <conflict type="frameshift">
        <sequence resource="EMBL" id="AL520040"/>
    </conflict>
</comment>
<keyword id="KW-0002">3D-structure</keyword>
<keyword id="KW-0025">Alternative splicing</keyword>
<keyword id="KW-0903">Direct protein sequencing</keyword>
<keyword id="KW-0225">Disease variant</keyword>
<keyword id="KW-0386">Hypusine biosynthesis</keyword>
<keyword id="KW-0991">Intellectual disability</keyword>
<keyword id="KW-0520">NAD</keyword>
<keyword id="KW-0597">Phosphoprotein</keyword>
<keyword id="KW-1267">Proteomics identification</keyword>
<keyword id="KW-1185">Reference proteome</keyword>
<keyword id="KW-0808">Transferase</keyword>
<dbReference type="EC" id="2.5.1.46" evidence="3"/>
<dbReference type="EMBL" id="L39068">
    <property type="protein sequence ID" value="AAA86282.1"/>
    <property type="molecule type" value="mRNA"/>
</dbReference>
<dbReference type="EMBL" id="U40579">
    <property type="protein sequence ID" value="AAA96151.1"/>
    <property type="molecule type" value="mRNA"/>
</dbReference>
<dbReference type="EMBL" id="U32178">
    <property type="protein sequence ID" value="AAB02179.1"/>
    <property type="molecule type" value="mRNA"/>
</dbReference>
<dbReference type="EMBL" id="U26266">
    <property type="protein sequence ID" value="AAB02175.1"/>
    <property type="molecule type" value="mRNA"/>
</dbReference>
<dbReference type="EMBL" id="AJ001701">
    <property type="protein sequence ID" value="CAA04940.1"/>
    <property type="molecule type" value="Genomic_DNA"/>
</dbReference>
<dbReference type="EMBL" id="AJ001702">
    <property type="protein sequence ID" value="CAA04940.1"/>
    <property type="status" value="JOINED"/>
    <property type="molecule type" value="Genomic_DNA"/>
</dbReference>
<dbReference type="EMBL" id="AJ001703">
    <property type="protein sequence ID" value="CAA04940.1"/>
    <property type="status" value="JOINED"/>
    <property type="molecule type" value="Genomic_DNA"/>
</dbReference>
<dbReference type="EMBL" id="AJ001704">
    <property type="protein sequence ID" value="CAA04940.1"/>
    <property type="status" value="JOINED"/>
    <property type="molecule type" value="Genomic_DNA"/>
</dbReference>
<dbReference type="EMBL" id="U79262">
    <property type="protein sequence ID" value="AAB50208.1"/>
    <property type="molecule type" value="mRNA"/>
</dbReference>
<dbReference type="EMBL" id="AL520040">
    <property type="status" value="NOT_ANNOTATED_CDS"/>
    <property type="molecule type" value="mRNA"/>
</dbReference>
<dbReference type="EMBL" id="AK291553">
    <property type="protein sequence ID" value="BAF84242.1"/>
    <property type="molecule type" value="mRNA"/>
</dbReference>
<dbReference type="EMBL" id="AC010422">
    <property type="status" value="NOT_ANNOTATED_CDS"/>
    <property type="molecule type" value="Genomic_DNA"/>
</dbReference>
<dbReference type="EMBL" id="CH471106">
    <property type="protein sequence ID" value="EAW84288.1"/>
    <property type="molecule type" value="Genomic_DNA"/>
</dbReference>
<dbReference type="EMBL" id="BC000333">
    <property type="protein sequence ID" value="AAH00333.1"/>
    <property type="molecule type" value="mRNA"/>
</dbReference>
<dbReference type="EMBL" id="BC014016">
    <property type="protein sequence ID" value="AAH14016.1"/>
    <property type="molecule type" value="mRNA"/>
</dbReference>
<dbReference type="CCDS" id="CCDS12276.1">
    <molecule id="P49366-1"/>
</dbReference>
<dbReference type="CCDS" id="CCDS12277.1">
    <molecule id="P49366-2"/>
</dbReference>
<dbReference type="CCDS" id="CCDS59354.1">
    <molecule id="P49366-3"/>
</dbReference>
<dbReference type="PIR" id="S68692">
    <property type="entry name" value="S68692"/>
</dbReference>
<dbReference type="RefSeq" id="NP_001193903.1">
    <molecule id="P49366-3"/>
    <property type="nucleotide sequence ID" value="NM_001206974.2"/>
</dbReference>
<dbReference type="RefSeq" id="NP_001921.1">
    <molecule id="P49366-1"/>
    <property type="nucleotide sequence ID" value="NM_001930.4"/>
</dbReference>
<dbReference type="RefSeq" id="NP_037538.1">
    <molecule id="P49366-2"/>
    <property type="nucleotide sequence ID" value="NM_013406.3"/>
</dbReference>
<dbReference type="RefSeq" id="XP_011526072.1">
    <property type="nucleotide sequence ID" value="XM_011527770.1"/>
</dbReference>
<dbReference type="PDB" id="1DHS">
    <property type="method" value="X-ray"/>
    <property type="resolution" value="2.20 A"/>
    <property type="chains" value="A=9-369"/>
</dbReference>
<dbReference type="PDB" id="1RLZ">
    <property type="method" value="X-ray"/>
    <property type="resolution" value="2.15 A"/>
    <property type="chains" value="A=1-369"/>
</dbReference>
<dbReference type="PDB" id="1ROZ">
    <property type="method" value="X-ray"/>
    <property type="resolution" value="2.21 A"/>
    <property type="chains" value="A/B=1-369"/>
</dbReference>
<dbReference type="PDB" id="1RQD">
    <property type="method" value="X-ray"/>
    <property type="resolution" value="3.00 A"/>
    <property type="chains" value="A/B=1-369"/>
</dbReference>
<dbReference type="PDB" id="6P4V">
    <property type="method" value="X-ray"/>
    <property type="resolution" value="1.65 A"/>
    <property type="chains" value="A/B=1-369"/>
</dbReference>
<dbReference type="PDB" id="6PGR">
    <property type="method" value="X-ray"/>
    <property type="resolution" value="1.95 A"/>
    <property type="chains" value="A/B=1-369"/>
</dbReference>
<dbReference type="PDB" id="6WKZ">
    <property type="method" value="X-ray"/>
    <property type="resolution" value="2.23 A"/>
    <property type="chains" value="A/B=1-369"/>
</dbReference>
<dbReference type="PDB" id="6WL6">
    <property type="method" value="X-ray"/>
    <property type="resolution" value="2.12 A"/>
    <property type="chains" value="A/B=1-369"/>
</dbReference>
<dbReference type="PDB" id="6XXH">
    <property type="method" value="X-ray"/>
    <property type="resolution" value="1.52 A"/>
    <property type="chains" value="A/B=1-369"/>
</dbReference>
<dbReference type="PDB" id="6XXI">
    <property type="method" value="X-ray"/>
    <property type="resolution" value="1.68 A"/>
    <property type="chains" value="A/B=1-369"/>
</dbReference>
<dbReference type="PDB" id="6XXJ">
    <property type="method" value="X-ray"/>
    <property type="resolution" value="1.41 A"/>
    <property type="chains" value="A/B=1-369"/>
</dbReference>
<dbReference type="PDB" id="6XXK">
    <property type="method" value="X-ray"/>
    <property type="resolution" value="1.65 A"/>
    <property type="chains" value="A/B=1-369"/>
</dbReference>
<dbReference type="PDB" id="6XXL">
    <property type="method" value="X-ray"/>
    <property type="resolution" value="1.69 A"/>
    <property type="chains" value="A/B=1-369"/>
</dbReference>
<dbReference type="PDB" id="6XXM">
    <property type="method" value="X-ray"/>
    <property type="resolution" value="1.67 A"/>
    <property type="chains" value="A/B=1-369"/>
</dbReference>
<dbReference type="PDB" id="7A6S">
    <property type="method" value="X-ray"/>
    <property type="resolution" value="1.75 A"/>
    <property type="chains" value="A/B=1-369"/>
</dbReference>
<dbReference type="PDB" id="7A6T">
    <property type="method" value="X-ray"/>
    <property type="resolution" value="1.66 A"/>
    <property type="chains" value="A/B=1-369"/>
</dbReference>
<dbReference type="PDB" id="8A0E">
    <property type="method" value="EM"/>
    <property type="resolution" value="2.80 A"/>
    <property type="chains" value="A/B/C/D=1-369"/>
</dbReference>
<dbReference type="PDB" id="8A0F">
    <property type="method" value="X-ray"/>
    <property type="resolution" value="1.64 A"/>
    <property type="chains" value="A/B=1-369"/>
</dbReference>
<dbReference type="PDB" id="8A0G">
    <property type="method" value="X-ray"/>
    <property type="resolution" value="1.84 A"/>
    <property type="chains" value="A/B=1-369"/>
</dbReference>
<dbReference type="PDB" id="8PVU">
    <property type="method" value="EM"/>
    <property type="resolution" value="3.50 A"/>
    <property type="chains" value="A/B/C/D=1-369"/>
</dbReference>
<dbReference type="PDB" id="8R3U">
    <property type="method" value="X-ray"/>
    <property type="resolution" value="1.63 A"/>
    <property type="chains" value="AAA/BBB/CCC/DDD=2-369"/>
</dbReference>
<dbReference type="PDBsum" id="1DHS"/>
<dbReference type="PDBsum" id="1RLZ"/>
<dbReference type="PDBsum" id="1ROZ"/>
<dbReference type="PDBsum" id="1RQD"/>
<dbReference type="PDBsum" id="6P4V"/>
<dbReference type="PDBsum" id="6PGR"/>
<dbReference type="PDBsum" id="6WKZ"/>
<dbReference type="PDBsum" id="6WL6"/>
<dbReference type="PDBsum" id="6XXH"/>
<dbReference type="PDBsum" id="6XXI"/>
<dbReference type="PDBsum" id="6XXJ"/>
<dbReference type="PDBsum" id="6XXK"/>
<dbReference type="PDBsum" id="6XXL"/>
<dbReference type="PDBsum" id="6XXM"/>
<dbReference type="PDBsum" id="7A6S"/>
<dbReference type="PDBsum" id="7A6T"/>
<dbReference type="PDBsum" id="8A0E"/>
<dbReference type="PDBsum" id="8A0F"/>
<dbReference type="PDBsum" id="8A0G"/>
<dbReference type="PDBsum" id="8PVU"/>
<dbReference type="PDBsum" id="8R3U"/>
<dbReference type="EMDB" id="EMD-15052"/>
<dbReference type="EMDB" id="EMD-17972"/>
<dbReference type="EMDB" id="EMD-17977"/>
<dbReference type="EMDB" id="EMD-17978"/>
<dbReference type="EMDB" id="EMD-17981"/>
<dbReference type="EMDB" id="EMD-17982"/>
<dbReference type="EMDB" id="EMD-17983"/>
<dbReference type="EMDB" id="EMD-17984"/>
<dbReference type="EMDB" id="EMD-17985"/>
<dbReference type="EMDB" id="EMD-17986"/>
<dbReference type="EMDB" id="EMD-17987"/>
<dbReference type="SMR" id="P49366"/>
<dbReference type="BioGRID" id="108070">
    <property type="interactions" value="116"/>
</dbReference>
<dbReference type="FunCoup" id="P49366">
    <property type="interactions" value="2106"/>
</dbReference>
<dbReference type="IntAct" id="P49366">
    <property type="interactions" value="55"/>
</dbReference>
<dbReference type="MINT" id="P49366"/>
<dbReference type="STRING" id="9606.ENSP00000210060"/>
<dbReference type="BindingDB" id="P49366"/>
<dbReference type="ChEMBL" id="CHEMBL4415"/>
<dbReference type="DrugBank" id="DB03639">
    <property type="generic name" value="1-Guanidinium-7-Aminoheptane"/>
</dbReference>
<dbReference type="iPTMnet" id="P49366"/>
<dbReference type="MetOSite" id="P49366"/>
<dbReference type="PhosphoSitePlus" id="P49366"/>
<dbReference type="BioMuta" id="DHPS"/>
<dbReference type="DMDM" id="1352267"/>
<dbReference type="jPOST" id="P49366"/>
<dbReference type="MassIVE" id="P49366"/>
<dbReference type="PaxDb" id="9606-ENSP00000210060"/>
<dbReference type="PeptideAtlas" id="P49366"/>
<dbReference type="ProteomicsDB" id="55996">
    <molecule id="P49366-1"/>
</dbReference>
<dbReference type="ProteomicsDB" id="55997">
    <molecule id="P49366-2"/>
</dbReference>
<dbReference type="Pumba" id="P49366"/>
<dbReference type="Antibodypedia" id="1964">
    <property type="antibodies" value="323 antibodies from 32 providers"/>
</dbReference>
<dbReference type="DNASU" id="1725"/>
<dbReference type="Ensembl" id="ENST00000210060.12">
    <molecule id="P49366-1"/>
    <property type="protein sequence ID" value="ENSP00000210060.6"/>
    <property type="gene ID" value="ENSG00000095059.17"/>
</dbReference>
<dbReference type="Ensembl" id="ENST00000351660.9">
    <molecule id="P49366-2"/>
    <property type="protein sequence ID" value="ENSP00000221303.5"/>
    <property type="gene ID" value="ENSG00000095059.17"/>
</dbReference>
<dbReference type="Ensembl" id="ENST00000594424.5">
    <molecule id="P49366-3"/>
    <property type="protein sequence ID" value="ENSP00000471886.1"/>
    <property type="gene ID" value="ENSG00000095059.17"/>
</dbReference>
<dbReference type="GeneID" id="1725"/>
<dbReference type="KEGG" id="hsa:1725"/>
<dbReference type="MANE-Select" id="ENST00000210060.12">
    <property type="protein sequence ID" value="ENSP00000210060.6"/>
    <property type="RefSeq nucleotide sequence ID" value="NM_001930.4"/>
    <property type="RefSeq protein sequence ID" value="NP_001921.1"/>
</dbReference>
<dbReference type="UCSC" id="uc002mug.3">
    <molecule id="P49366-1"/>
    <property type="organism name" value="human"/>
</dbReference>
<dbReference type="AGR" id="HGNC:2869"/>
<dbReference type="CTD" id="1725"/>
<dbReference type="DisGeNET" id="1725"/>
<dbReference type="GeneCards" id="DHPS"/>
<dbReference type="HGNC" id="HGNC:2869">
    <property type="gene designation" value="DHPS"/>
</dbReference>
<dbReference type="HPA" id="ENSG00000095059">
    <property type="expression patterns" value="Low tissue specificity"/>
</dbReference>
<dbReference type="MalaCards" id="DHPS"/>
<dbReference type="MIM" id="600944">
    <property type="type" value="gene"/>
</dbReference>
<dbReference type="MIM" id="618480">
    <property type="type" value="phenotype"/>
</dbReference>
<dbReference type="neXtProt" id="NX_P49366"/>
<dbReference type="OpenTargets" id="ENSG00000095059"/>
<dbReference type="PharmGKB" id="PA27329"/>
<dbReference type="VEuPathDB" id="HostDB:ENSG00000095059"/>
<dbReference type="eggNOG" id="KOG2924">
    <property type="taxonomic scope" value="Eukaryota"/>
</dbReference>
<dbReference type="GeneTree" id="ENSGT00390000008063"/>
<dbReference type="HOGENOM" id="CLU_039781_0_0_1"/>
<dbReference type="InParanoid" id="P49366"/>
<dbReference type="OrthoDB" id="294378at2759"/>
<dbReference type="PAN-GO" id="P49366">
    <property type="GO annotations" value="3 GO annotations based on evolutionary models"/>
</dbReference>
<dbReference type="PhylomeDB" id="P49366"/>
<dbReference type="TreeFam" id="TF300625"/>
<dbReference type="BioCyc" id="MetaCyc:HS01810-MONOMER"/>
<dbReference type="BRENDA" id="2.5.1.46">
    <property type="organism ID" value="2681"/>
</dbReference>
<dbReference type="PathwayCommons" id="P49366"/>
<dbReference type="Reactome" id="R-HSA-204626">
    <property type="pathway name" value="Hypusine synthesis from eIF5A-lysine"/>
</dbReference>
<dbReference type="SABIO-RK" id="P49366"/>
<dbReference type="SignaLink" id="P49366"/>
<dbReference type="SIGNOR" id="P49366"/>
<dbReference type="UniPathway" id="UPA00354"/>
<dbReference type="BioGRID-ORCS" id="1725">
    <property type="hits" value="632 hits in 1165 CRISPR screens"/>
</dbReference>
<dbReference type="ChiTaRS" id="DHPS">
    <property type="organism name" value="human"/>
</dbReference>
<dbReference type="EvolutionaryTrace" id="P49366"/>
<dbReference type="GeneWiki" id="DHPS"/>
<dbReference type="GenomeRNAi" id="1725"/>
<dbReference type="Pharos" id="P49366">
    <property type="development level" value="Tchem"/>
</dbReference>
<dbReference type="PRO" id="PR:P49366"/>
<dbReference type="Proteomes" id="UP000005640">
    <property type="component" value="Chromosome 19"/>
</dbReference>
<dbReference type="RNAct" id="P49366">
    <property type="molecule type" value="protein"/>
</dbReference>
<dbReference type="Bgee" id="ENSG00000095059">
    <property type="expression patterns" value="Expressed in right hemisphere of cerebellum and 97 other cell types or tissues"/>
</dbReference>
<dbReference type="ExpressionAtlas" id="P49366">
    <property type="expression patterns" value="baseline and differential"/>
</dbReference>
<dbReference type="GO" id="GO:0005737">
    <property type="term" value="C:cytoplasm"/>
    <property type="evidence" value="ECO:0000318"/>
    <property type="project" value="GO_Central"/>
</dbReference>
<dbReference type="GO" id="GO:0005829">
    <property type="term" value="C:cytosol"/>
    <property type="evidence" value="ECO:0000304"/>
    <property type="project" value="Reactome"/>
</dbReference>
<dbReference type="GO" id="GO:0034038">
    <property type="term" value="F:deoxyhypusine synthase activity"/>
    <property type="evidence" value="ECO:0000314"/>
    <property type="project" value="UniProtKB"/>
</dbReference>
<dbReference type="GO" id="GO:0042802">
    <property type="term" value="F:identical protein binding"/>
    <property type="evidence" value="ECO:0000353"/>
    <property type="project" value="IntAct"/>
</dbReference>
<dbReference type="GO" id="GO:0042593">
    <property type="term" value="P:glucose homeostasis"/>
    <property type="evidence" value="ECO:0007669"/>
    <property type="project" value="Ensembl"/>
</dbReference>
<dbReference type="GO" id="GO:0008612">
    <property type="term" value="P:peptidyl-lysine modification to peptidyl-hypusine"/>
    <property type="evidence" value="ECO:0000314"/>
    <property type="project" value="UniProtKB"/>
</dbReference>
<dbReference type="GO" id="GO:0008284">
    <property type="term" value="P:positive regulation of cell population proliferation"/>
    <property type="evidence" value="ECO:0000304"/>
    <property type="project" value="ProtInc"/>
</dbReference>
<dbReference type="GO" id="GO:0042102">
    <property type="term" value="P:positive regulation of T cell proliferation"/>
    <property type="evidence" value="ECO:0007669"/>
    <property type="project" value="Ensembl"/>
</dbReference>
<dbReference type="GO" id="GO:0046203">
    <property type="term" value="P:spermidine catabolic process"/>
    <property type="evidence" value="ECO:0007669"/>
    <property type="project" value="Ensembl"/>
</dbReference>
<dbReference type="GO" id="GO:0008216">
    <property type="term" value="P:spermidine metabolic process"/>
    <property type="evidence" value="ECO:0000314"/>
    <property type="project" value="UniProtKB"/>
</dbReference>
<dbReference type="GO" id="GO:0006412">
    <property type="term" value="P:translation"/>
    <property type="evidence" value="ECO:0000304"/>
    <property type="project" value="ProtInc"/>
</dbReference>
<dbReference type="FunFam" id="3.40.910.10:FF:000010">
    <property type="entry name" value="Deoxyhypusine synthase"/>
    <property type="match status" value="1"/>
</dbReference>
<dbReference type="Gene3D" id="3.40.910.10">
    <property type="entry name" value="Deoxyhypusine synthase"/>
    <property type="match status" value="1"/>
</dbReference>
<dbReference type="InterPro" id="IPR002773">
    <property type="entry name" value="Deoxyhypusine_synthase"/>
</dbReference>
<dbReference type="InterPro" id="IPR036982">
    <property type="entry name" value="Deoxyhypusine_synthase_sf"/>
</dbReference>
<dbReference type="InterPro" id="IPR029035">
    <property type="entry name" value="DHS-like_NAD/FAD-binding_dom"/>
</dbReference>
<dbReference type="NCBIfam" id="TIGR00321">
    <property type="entry name" value="dhys"/>
    <property type="match status" value="1"/>
</dbReference>
<dbReference type="PANTHER" id="PTHR11703">
    <property type="entry name" value="DEOXYHYPUSINE SYNTHASE"/>
    <property type="match status" value="1"/>
</dbReference>
<dbReference type="PANTHER" id="PTHR11703:SF0">
    <property type="entry name" value="DEOXYHYPUSINE SYNTHASE"/>
    <property type="match status" value="1"/>
</dbReference>
<dbReference type="Pfam" id="PF01916">
    <property type="entry name" value="DS"/>
    <property type="match status" value="1"/>
</dbReference>
<dbReference type="SUPFAM" id="SSF52467">
    <property type="entry name" value="DHS-like NAD/FAD-binding domain"/>
    <property type="match status" value="1"/>
</dbReference>
<accession>P49366</accession>
<accession>A8K688</accession>
<accession>M0R1I5</accession>
<accession>Q13184</accession>
<accession>Q13276</accession>
<accession>Q9UDG0</accession>
<gene>
    <name type="primary">DHPS</name>
    <name type="synonym">DS</name>
</gene>
<protein>
    <recommendedName>
        <fullName>Deoxyhypusine synthase</fullName>
        <shortName>DHS</shortName>
        <ecNumber evidence="3">2.5.1.46</ecNumber>
    </recommendedName>
</protein>
<sequence length="369" mass="40971">MEGSLEREAPAGALAAVLKHSSTLPPESTQVRGYDFNRGVNYRALLEAFGTTGFQATNFGRAVQQVNAMIEKKLEPLSQDEDQHADLTQSRRPLTSCTIFLGYTSNLISSGIRETIRYLVQHNMVDVLVTTAGGVEEDLIKCLAPTYLGEFSLRGKELRENGINRIGNLLVPNENYCKFEDWLMPILDQMVMEQNTEGVKWTPSKMIARLGKEINNPESVYYWAQKNHIPVFSPALTDGSLGDMIFFHSYKNPGLVLDIVEDLRLINTQAIFAKCTGMIILGGGVVKHHIANANLMRNGADYAVYINTAQEFDGSDSGARPDEAVSWGKIRVDAQPVKVYADASLVFPLLVAETFAQKMDAFMHEKNED</sequence>
<feature type="chain" id="PRO_0000134469" description="Deoxyhypusine synthase">
    <location>
        <begin position="1"/>
        <end position="369"/>
    </location>
</feature>
<feature type="active site" description="Nucleophile" evidence="4">
    <location>
        <position position="329"/>
    </location>
</feature>
<feature type="binding site" evidence="5">
    <location>
        <begin position="105"/>
        <end position="109"/>
    </location>
    <ligand>
        <name>NAD(+)</name>
        <dbReference type="ChEBI" id="CHEBI:57540"/>
    </ligand>
</feature>
<feature type="binding site" evidence="5">
    <location>
        <begin position="131"/>
        <end position="133"/>
    </location>
    <ligand>
        <name>NAD(+)</name>
        <dbReference type="ChEBI" id="CHEBI:57540"/>
    </ligand>
</feature>
<feature type="binding site" evidence="8">
    <location>
        <begin position="136"/>
        <end position="137"/>
    </location>
    <ligand>
        <name>spermidine</name>
        <dbReference type="ChEBI" id="CHEBI:57834"/>
    </ligand>
</feature>
<feature type="binding site" evidence="5">
    <location>
        <position position="137"/>
    </location>
    <ligand>
        <name>NAD(+)</name>
        <dbReference type="ChEBI" id="CHEBI:57540"/>
    </ligand>
</feature>
<feature type="binding site" evidence="5">
    <location>
        <position position="238"/>
    </location>
    <ligand>
        <name>NAD(+)</name>
        <dbReference type="ChEBI" id="CHEBI:57540"/>
    </ligand>
</feature>
<feature type="binding site" evidence="8">
    <location>
        <position position="243"/>
    </location>
    <ligand>
        <name>spermidine</name>
        <dbReference type="ChEBI" id="CHEBI:57834"/>
    </ligand>
</feature>
<feature type="binding site" evidence="5">
    <location>
        <position position="283"/>
    </location>
    <ligand>
        <name>NAD(+)</name>
        <dbReference type="ChEBI" id="CHEBI:57540"/>
    </ligand>
</feature>
<feature type="binding site" evidence="8">
    <location>
        <position position="288"/>
    </location>
    <ligand>
        <name>spermidine</name>
        <dbReference type="ChEBI" id="CHEBI:57834"/>
    </ligand>
</feature>
<feature type="binding site" evidence="5">
    <location>
        <begin position="308"/>
        <end position="309"/>
    </location>
    <ligand>
        <name>NAD(+)</name>
        <dbReference type="ChEBI" id="CHEBI:57540"/>
    </ligand>
</feature>
<feature type="binding site" evidence="8">
    <location>
        <begin position="314"/>
        <end position="316"/>
    </location>
    <ligand>
        <name>spermidine</name>
        <dbReference type="ChEBI" id="CHEBI:57834"/>
    </ligand>
</feature>
<feature type="binding site" evidence="8">
    <location>
        <begin position="323"/>
        <end position="329"/>
    </location>
    <ligand>
        <name>spermidine</name>
        <dbReference type="ChEBI" id="CHEBI:57834"/>
    </ligand>
</feature>
<feature type="binding site" evidence="5">
    <location>
        <begin position="342"/>
        <end position="343"/>
    </location>
    <ligand>
        <name>NAD(+)</name>
        <dbReference type="ChEBI" id="CHEBI:57540"/>
    </ligand>
</feature>
<feature type="modified residue" description="Phosphoserine" evidence="9 10">
    <location>
        <position position="78"/>
    </location>
</feature>
<feature type="splice variant" id="VSP_047564" description="In isoform 3." evidence="7">
    <original>MEGSLEREAPAGALAAVLKHSSTLPPESTQVRGYDFNRGVNYRALLEAFGTTGFQATNFGRAVQQVNA</original>
    <variation>MPIIPAFWEAEAGGSREEEFETSLAN</variation>
    <location>
        <begin position="1"/>
        <end position="68"/>
    </location>
</feature>
<feature type="splice variant" id="VSP_001351" description="In isoform Short." evidence="6">
    <location>
        <begin position="262"/>
        <end position="308"/>
    </location>
</feature>
<feature type="sequence variant" id="VAR_082649" description="In NEDSSWI; decreased deoxyhypusine synthase activity; dbSNP:rs758100382." evidence="3">
    <original>N</original>
    <variation>S</variation>
    <location>
        <position position="173"/>
    </location>
</feature>
<feature type="sequence variant" id="VAR_043005" description="In dbSNP:rs10425108.">
    <original>E</original>
    <variation>D</variation>
    <location>
        <position position="174"/>
    </location>
</feature>
<feature type="sequence variant" id="VAR_082650" description="In NEDSSWI; loss of deoxyhypusine synthase activity." evidence="3">
    <location>
        <begin position="305"/>
        <end position="306"/>
    </location>
</feature>
<feature type="mutagenesis site" description="Strongly reduced NAD and spermidine binding. Reduced activity." evidence="1">
    <original>N</original>
    <variation>A</variation>
    <location>
        <position position="106"/>
    </location>
</feature>
<feature type="mutagenesis site" description="Strongly reduced spermidine binding. Reduced activity." evidence="1">
    <original>S</original>
    <variation>A</variation>
    <location>
        <position position="109"/>
    </location>
</feature>
<feature type="mutagenesis site" description="Strongly reduced NAD binding. Strongly reduced formation of covalent intermediate." evidence="1">
    <original>E</original>
    <variation>A</variation>
    <location>
        <position position="137"/>
    </location>
</feature>
<feature type="mutagenesis site" description="Strongly reduced NAD binding. Strongly reduced formation of covalent intermediate." evidence="1">
    <original>D</original>
    <variation>A</variation>
    <location>
        <position position="238"/>
    </location>
</feature>
<feature type="mutagenesis site" description="Reduces spermidine binding by 98%. Strongly reduced formation of covalent intermediate." evidence="1">
    <original>D</original>
    <variation>A</variation>
    <location>
        <position position="243"/>
    </location>
</feature>
<feature type="mutagenesis site" description="Reduces covalent intermediate formation and deoxyhypusine synthesis by 99.5%. Retains low spermidine cleavage activity." evidence="4">
    <original>K</original>
    <variation>A</variation>
    <location>
        <position position="287"/>
    </location>
</feature>
<feature type="mutagenesis site" description="Reduces spermidine binding by 98%. Strongly reduced NAD binding. Strongly reduced formation of covalent intermediate." evidence="1">
    <original>H</original>
    <variation>A</variation>
    <location>
        <position position="288"/>
    </location>
</feature>
<feature type="mutagenesis site" description="Strongly reduced NAD binding. No effect on enzyme activity." evidence="1">
    <original>Y</original>
    <variation>A</variation>
    <location>
        <position position="305"/>
    </location>
</feature>
<feature type="mutagenesis site" description="Strongly reduced NAD binding." evidence="1">
    <original>D</original>
    <variation>A</variation>
    <location>
        <position position="313"/>
    </location>
</feature>
<feature type="mutagenesis site" description="Reduces spermidine binding by 98%. Loss of covalent intermediate formation and deoxyhypusine synthesis." evidence="1">
    <original>D</original>
    <variation>A</variation>
    <location>
        <position position="316"/>
    </location>
</feature>
<feature type="mutagenesis site" description="Strongly reduced NAD binding. No effect on enzyme activity." evidence="1">
    <original>S</original>
    <variation>A</variation>
    <location>
        <position position="317"/>
    </location>
</feature>
<feature type="mutagenesis site" description="Reduces spermidine binding by 98%. Strongly reduced formation of covalent intermediate." evidence="1">
    <original>E</original>
    <variation>A</variation>
    <location>
        <position position="323"/>
    </location>
</feature>
<feature type="mutagenesis site" description="Reduces spermidine binding by 98%. Loss of covalent intermediate formation and deoxyhypusine synthesis." evidence="1">
    <original>W</original>
    <variation>A</variation>
    <location>
        <position position="327"/>
    </location>
</feature>
<feature type="mutagenesis site" description="Loss of covalent intermediate formation and deoxyhypusine synthesis." evidence="4">
    <original>K</original>
    <variation>A</variation>
    <variation>R</variation>
    <location>
        <position position="329"/>
    </location>
</feature>
<feature type="mutagenesis site" description="Strongly reduced NAD binding. Strongly reduced activity." evidence="1">
    <original>D</original>
    <variation>A</variation>
    <location>
        <position position="342"/>
    </location>
</feature>
<feature type="sequence conflict" description="In Ref. 3; AAB02175/AAB02179." evidence="8" ref="3">
    <original>A</original>
    <variation>R</variation>
    <location>
        <position position="11"/>
    </location>
</feature>
<feature type="sequence conflict" description="In Ref. 3; AAB02175/AAB02179." evidence="8" ref="3">
    <original>AL</original>
    <variation>R</variation>
    <location>
        <begin position="13"/>
        <end position="14"/>
    </location>
</feature>
<feature type="sequence conflict" description="In Ref. 3; AAB02175/AAB02179." evidence="8" ref="3">
    <original>A</original>
    <variation>G</variation>
    <location>
        <position position="85"/>
    </location>
</feature>
<feature type="sequence conflict" description="In Ref. 3; AAB02175/AAB02179." evidence="8" ref="3">
    <original>T</original>
    <variation>I</variation>
    <location>
        <position position="196"/>
    </location>
</feature>
<feature type="sequence conflict" description="In Ref. 3; AAB02175/AAB02179." evidence="8" ref="3">
    <original>V</original>
    <variation>A</variation>
    <location>
        <position position="199"/>
    </location>
</feature>
<feature type="sequence conflict" description="In Ref. 3; AAB02175/AAB02179." evidence="8" ref="3">
    <original>V</original>
    <variation>A</variation>
    <location>
        <position position="220"/>
    </location>
</feature>
<feature type="sequence conflict" description="In Ref. 11; AA sequence." evidence="8" ref="11">
    <original>H</original>
    <variation>K</variation>
    <location>
        <position position="228"/>
    </location>
</feature>
<feature type="sequence conflict" description="In Ref. 3; AAB02179." evidence="8" ref="3">
    <original>MR</original>
    <variation>SG</variation>
    <location>
        <begin position="296"/>
        <end position="297"/>
    </location>
</feature>
<feature type="sequence conflict" description="In Ref. 3; AAB02179." evidence="8" ref="3">
    <original>E</original>
    <variation>EE</variation>
    <location>
        <position position="311"/>
    </location>
</feature>
<feature type="helix" evidence="11">
    <location>
        <begin position="11"/>
        <end position="17"/>
    </location>
</feature>
<feature type="helix" evidence="11">
    <location>
        <begin position="36"/>
        <end position="38"/>
    </location>
</feature>
<feature type="helix" evidence="11">
    <location>
        <begin position="42"/>
        <end position="47"/>
    </location>
</feature>
<feature type="helix" evidence="11">
    <location>
        <begin position="48"/>
        <end position="51"/>
    </location>
</feature>
<feature type="helix" evidence="11">
    <location>
        <begin position="54"/>
        <end position="73"/>
    </location>
</feature>
<feature type="helix" evidence="11">
    <location>
        <begin position="81"/>
        <end position="88"/>
    </location>
</feature>
<feature type="strand" evidence="11">
    <location>
        <begin position="96"/>
        <end position="103"/>
    </location>
</feature>
<feature type="helix" evidence="11">
    <location>
        <begin position="105"/>
        <end position="109"/>
    </location>
</feature>
<feature type="helix" evidence="11">
    <location>
        <begin position="112"/>
        <end position="121"/>
    </location>
</feature>
<feature type="strand" evidence="11">
    <location>
        <begin position="126"/>
        <end position="130"/>
    </location>
</feature>
<feature type="helix" evidence="11">
    <location>
        <begin position="132"/>
        <end position="140"/>
    </location>
</feature>
<feature type="turn" evidence="11">
    <location>
        <begin position="141"/>
        <end position="143"/>
    </location>
</feature>
<feature type="helix" evidence="11">
    <location>
        <begin position="155"/>
        <end position="160"/>
    </location>
</feature>
<feature type="strand" evidence="11">
    <location>
        <begin position="163"/>
        <end position="166"/>
    </location>
</feature>
<feature type="strand" evidence="11">
    <location>
        <begin position="169"/>
        <end position="172"/>
    </location>
</feature>
<feature type="helix" evidence="11">
    <location>
        <begin position="173"/>
        <end position="196"/>
    </location>
</feature>
<feature type="helix" evidence="11">
    <location>
        <begin position="203"/>
        <end position="214"/>
    </location>
</feature>
<feature type="helix" evidence="11">
    <location>
        <begin position="220"/>
        <end position="226"/>
    </location>
</feature>
<feature type="turn" evidence="11">
    <location>
        <begin position="234"/>
        <end position="237"/>
    </location>
</feature>
<feature type="helix" evidence="11">
    <location>
        <begin position="240"/>
        <end position="251"/>
    </location>
</feature>
<feature type="helix" evidence="11">
    <location>
        <begin position="260"/>
        <end position="271"/>
    </location>
</feature>
<feature type="strand" evidence="11">
    <location>
        <begin position="274"/>
        <end position="282"/>
    </location>
</feature>
<feature type="helix" evidence="11">
    <location>
        <begin position="284"/>
        <end position="295"/>
    </location>
</feature>
<feature type="turn" evidence="11">
    <location>
        <begin position="296"/>
        <end position="298"/>
    </location>
</feature>
<feature type="strand" evidence="11">
    <location>
        <begin position="300"/>
        <end position="307"/>
    </location>
</feature>
<feature type="helix" evidence="11">
    <location>
        <begin position="311"/>
        <end position="313"/>
    </location>
</feature>
<feature type="turn" evidence="11">
    <location>
        <begin position="316"/>
        <end position="318"/>
    </location>
</feature>
<feature type="helix" evidence="11">
    <location>
        <begin position="321"/>
        <end position="327"/>
    </location>
</feature>
<feature type="strand" evidence="11">
    <location>
        <begin position="337"/>
        <end position="341"/>
    </location>
</feature>
<feature type="helix" evidence="11">
    <location>
        <begin position="343"/>
        <end position="353"/>
    </location>
</feature>
<feature type="helix" evidence="11">
    <location>
        <begin position="355"/>
        <end position="358"/>
    </location>
</feature>
<feature type="turn" evidence="11">
    <location>
        <begin position="359"/>
        <end position="362"/>
    </location>
</feature>
<evidence type="ECO:0000269" key="1">
    <source>
    </source>
</evidence>
<evidence type="ECO:0000269" key="2">
    <source>
    </source>
</evidence>
<evidence type="ECO:0000269" key="3">
    <source>
    </source>
</evidence>
<evidence type="ECO:0000269" key="4">
    <source>
    </source>
</evidence>
<evidence type="ECO:0000269" key="5">
    <source>
    </source>
</evidence>
<evidence type="ECO:0000303" key="6">
    <source>
    </source>
</evidence>
<evidence type="ECO:0000303" key="7">
    <source ref="6"/>
</evidence>
<evidence type="ECO:0000305" key="8"/>
<evidence type="ECO:0007744" key="9">
    <source>
    </source>
</evidence>
<evidence type="ECO:0007744" key="10">
    <source>
    </source>
</evidence>
<evidence type="ECO:0007829" key="11">
    <source>
        <dbReference type="PDB" id="6XXJ"/>
    </source>
</evidence>
<reference key="1">
    <citation type="journal article" date="1995" name="J. Biol. Chem.">
        <title>Cloning and expression of human deoxyhypusine synthase cDNA. Structure-function studies with the recombinant enzyme and mutant proteins.</title>
        <authorList>
            <person name="Joe Y.A."/>
            <person name="Wolff E.C."/>
            <person name="Park M.H."/>
        </authorList>
    </citation>
    <scope>NUCLEOTIDE SEQUENCE [MRNA] (ISOFORM LONG)</scope>
</reference>
<reference key="2">
    <citation type="journal article" date="1996" name="FEBS Lett.">
        <title>Molecular characterization of a cDNA encoding functional human deoxyhypusine synthase and chromosomal mapping of the corresponding gene locus.</title>
        <authorList>
            <person name="Bevec D."/>
            <person name="Kappel B."/>
            <person name="Jaksche H."/>
            <person name="Csonga R."/>
            <person name="Hauber J."/>
            <person name="Klier H."/>
            <person name="Steinkasserer A."/>
        </authorList>
    </citation>
    <scope>NUCLEOTIDE SEQUENCE [MRNA] (ISOFORM LONG)</scope>
    <source>
        <tissue>Blood</tissue>
    </source>
</reference>
<reference key="3">
    <citation type="journal article" date="1996" name="Biochem. J.">
        <title>Molecular cloning and functional expression of human deoxyhypusine synthase cDNA based on expressed sequence tag information.</title>
        <authorList>
            <person name="Yan Y.P."/>
            <person name="Tao Y."/>
            <person name="Chen K.Y."/>
        </authorList>
    </citation>
    <scope>NUCLEOTIDE SEQUENCE [MRNA] (ISOFORMS LONG AND SHORT)</scope>
</reference>
<reference key="4">
    <citation type="journal article" date="1998" name="Gene">
        <title>Localization and genomic structure of human deoxyhypusine synthase gene on chromosome 19p13.2-distal 19p13.1.</title>
        <authorList>
            <person name="Mantuano E."/>
            <person name="Trettel F."/>
            <person name="Olsen A.S."/>
            <person name="Lennin G."/>
            <person name="Frontali M."/>
            <person name="Jodice C."/>
        </authorList>
    </citation>
    <scope>NUCLEOTIDE SEQUENCE [GENOMIC DNA]</scope>
</reference>
<reference key="5">
    <citation type="journal article" date="1997" name="Genome Res.">
        <title>Large-scale concatenation cDNA sequencing.</title>
        <authorList>
            <person name="Yu W."/>
            <person name="Andersson B."/>
            <person name="Worley K.C."/>
            <person name="Muzny D.M."/>
            <person name="Ding Y."/>
            <person name="Liu W."/>
            <person name="Ricafrente J.Y."/>
            <person name="Wentland M.A."/>
            <person name="Lennon G."/>
            <person name="Gibbs R.A."/>
        </authorList>
    </citation>
    <scope>NUCLEOTIDE SEQUENCE [LARGE SCALE MRNA] (ISOFORM LONG)</scope>
    <source>
        <tissue>Brain</tissue>
    </source>
</reference>
<reference key="6">
    <citation type="submission" date="2003-04" db="EMBL/GenBank/DDBJ databases">
        <title>Full-length cDNA libraries and normalization.</title>
        <authorList>
            <person name="Li W.B."/>
            <person name="Gruber C."/>
            <person name="Jessee J."/>
            <person name="Polayes D."/>
        </authorList>
    </citation>
    <scope>NUCLEOTIDE SEQUENCE [LARGE SCALE MRNA] (ISOFORM 3)</scope>
    <source>
        <tissue>Neuroblastoma</tissue>
    </source>
</reference>
<reference key="7">
    <citation type="journal article" date="2004" name="Nat. Genet.">
        <title>Complete sequencing and characterization of 21,243 full-length human cDNAs.</title>
        <authorList>
            <person name="Ota T."/>
            <person name="Suzuki Y."/>
            <person name="Nishikawa T."/>
            <person name="Otsuki T."/>
            <person name="Sugiyama T."/>
            <person name="Irie R."/>
            <person name="Wakamatsu A."/>
            <person name="Hayashi K."/>
            <person name="Sato H."/>
            <person name="Nagai K."/>
            <person name="Kimura K."/>
            <person name="Makita H."/>
            <person name="Sekine M."/>
            <person name="Obayashi M."/>
            <person name="Nishi T."/>
            <person name="Shibahara T."/>
            <person name="Tanaka T."/>
            <person name="Ishii S."/>
            <person name="Yamamoto J."/>
            <person name="Saito K."/>
            <person name="Kawai Y."/>
            <person name="Isono Y."/>
            <person name="Nakamura Y."/>
            <person name="Nagahari K."/>
            <person name="Murakami K."/>
            <person name="Yasuda T."/>
            <person name="Iwayanagi T."/>
            <person name="Wagatsuma M."/>
            <person name="Shiratori A."/>
            <person name="Sudo H."/>
            <person name="Hosoiri T."/>
            <person name="Kaku Y."/>
            <person name="Kodaira H."/>
            <person name="Kondo H."/>
            <person name="Sugawara M."/>
            <person name="Takahashi M."/>
            <person name="Kanda K."/>
            <person name="Yokoi T."/>
            <person name="Furuya T."/>
            <person name="Kikkawa E."/>
            <person name="Omura Y."/>
            <person name="Abe K."/>
            <person name="Kamihara K."/>
            <person name="Katsuta N."/>
            <person name="Sato K."/>
            <person name="Tanikawa M."/>
            <person name="Yamazaki M."/>
            <person name="Ninomiya K."/>
            <person name="Ishibashi T."/>
            <person name="Yamashita H."/>
            <person name="Murakawa K."/>
            <person name="Fujimori K."/>
            <person name="Tanai H."/>
            <person name="Kimata M."/>
            <person name="Watanabe M."/>
            <person name="Hiraoka S."/>
            <person name="Chiba Y."/>
            <person name="Ishida S."/>
            <person name="Ono Y."/>
            <person name="Takiguchi S."/>
            <person name="Watanabe S."/>
            <person name="Yosida M."/>
            <person name="Hotuta T."/>
            <person name="Kusano J."/>
            <person name="Kanehori K."/>
            <person name="Takahashi-Fujii A."/>
            <person name="Hara H."/>
            <person name="Tanase T.-O."/>
            <person name="Nomura Y."/>
            <person name="Togiya S."/>
            <person name="Komai F."/>
            <person name="Hara R."/>
            <person name="Takeuchi K."/>
            <person name="Arita M."/>
            <person name="Imose N."/>
            <person name="Musashino K."/>
            <person name="Yuuki H."/>
            <person name="Oshima A."/>
            <person name="Sasaki N."/>
            <person name="Aotsuka S."/>
            <person name="Yoshikawa Y."/>
            <person name="Matsunawa H."/>
            <person name="Ichihara T."/>
            <person name="Shiohata N."/>
            <person name="Sano S."/>
            <person name="Moriya S."/>
            <person name="Momiyama H."/>
            <person name="Satoh N."/>
            <person name="Takami S."/>
            <person name="Terashima Y."/>
            <person name="Suzuki O."/>
            <person name="Nakagawa S."/>
            <person name="Senoh A."/>
            <person name="Mizoguchi H."/>
            <person name="Goto Y."/>
            <person name="Shimizu F."/>
            <person name="Wakebe H."/>
            <person name="Hishigaki H."/>
            <person name="Watanabe T."/>
            <person name="Sugiyama A."/>
            <person name="Takemoto M."/>
            <person name="Kawakami B."/>
            <person name="Yamazaki M."/>
            <person name="Watanabe K."/>
            <person name="Kumagai A."/>
            <person name="Itakura S."/>
            <person name="Fukuzumi Y."/>
            <person name="Fujimori Y."/>
            <person name="Komiyama M."/>
            <person name="Tashiro H."/>
            <person name="Tanigami A."/>
            <person name="Fujiwara T."/>
            <person name="Ono T."/>
            <person name="Yamada K."/>
            <person name="Fujii Y."/>
            <person name="Ozaki K."/>
            <person name="Hirao M."/>
            <person name="Ohmori Y."/>
            <person name="Kawabata A."/>
            <person name="Hikiji T."/>
            <person name="Kobatake N."/>
            <person name="Inagaki H."/>
            <person name="Ikema Y."/>
            <person name="Okamoto S."/>
            <person name="Okitani R."/>
            <person name="Kawakami T."/>
            <person name="Noguchi S."/>
            <person name="Itoh T."/>
            <person name="Shigeta K."/>
            <person name="Senba T."/>
            <person name="Matsumura K."/>
            <person name="Nakajima Y."/>
            <person name="Mizuno T."/>
            <person name="Morinaga M."/>
            <person name="Sasaki M."/>
            <person name="Togashi T."/>
            <person name="Oyama M."/>
            <person name="Hata H."/>
            <person name="Watanabe M."/>
            <person name="Komatsu T."/>
            <person name="Mizushima-Sugano J."/>
            <person name="Satoh T."/>
            <person name="Shirai Y."/>
            <person name="Takahashi Y."/>
            <person name="Nakagawa K."/>
            <person name="Okumura K."/>
            <person name="Nagase T."/>
            <person name="Nomura N."/>
            <person name="Kikuchi H."/>
            <person name="Masuho Y."/>
            <person name="Yamashita R."/>
            <person name="Nakai K."/>
            <person name="Yada T."/>
            <person name="Nakamura Y."/>
            <person name="Ohara O."/>
            <person name="Isogai T."/>
            <person name="Sugano S."/>
        </authorList>
    </citation>
    <scope>NUCLEOTIDE SEQUENCE [LARGE SCALE MRNA] (ISOFORM LONG)</scope>
    <source>
        <tissue>Placenta</tissue>
    </source>
</reference>
<reference key="8">
    <citation type="journal article" date="2004" name="Nature">
        <title>The DNA sequence and biology of human chromosome 19.</title>
        <authorList>
            <person name="Grimwood J."/>
            <person name="Gordon L.A."/>
            <person name="Olsen A.S."/>
            <person name="Terry A."/>
            <person name="Schmutz J."/>
            <person name="Lamerdin J.E."/>
            <person name="Hellsten U."/>
            <person name="Goodstein D."/>
            <person name="Couronne O."/>
            <person name="Tran-Gyamfi M."/>
            <person name="Aerts A."/>
            <person name="Altherr M."/>
            <person name="Ashworth L."/>
            <person name="Bajorek E."/>
            <person name="Black S."/>
            <person name="Branscomb E."/>
            <person name="Caenepeel S."/>
            <person name="Carrano A.V."/>
            <person name="Caoile C."/>
            <person name="Chan Y.M."/>
            <person name="Christensen M."/>
            <person name="Cleland C.A."/>
            <person name="Copeland A."/>
            <person name="Dalin E."/>
            <person name="Dehal P."/>
            <person name="Denys M."/>
            <person name="Detter J.C."/>
            <person name="Escobar J."/>
            <person name="Flowers D."/>
            <person name="Fotopulos D."/>
            <person name="Garcia C."/>
            <person name="Georgescu A.M."/>
            <person name="Glavina T."/>
            <person name="Gomez M."/>
            <person name="Gonzales E."/>
            <person name="Groza M."/>
            <person name="Hammon N."/>
            <person name="Hawkins T."/>
            <person name="Haydu L."/>
            <person name="Ho I."/>
            <person name="Huang W."/>
            <person name="Israni S."/>
            <person name="Jett J."/>
            <person name="Kadner K."/>
            <person name="Kimball H."/>
            <person name="Kobayashi A."/>
            <person name="Larionov V."/>
            <person name="Leem S.-H."/>
            <person name="Lopez F."/>
            <person name="Lou Y."/>
            <person name="Lowry S."/>
            <person name="Malfatti S."/>
            <person name="Martinez D."/>
            <person name="McCready P.M."/>
            <person name="Medina C."/>
            <person name="Morgan J."/>
            <person name="Nelson K."/>
            <person name="Nolan M."/>
            <person name="Ovcharenko I."/>
            <person name="Pitluck S."/>
            <person name="Pollard M."/>
            <person name="Popkie A.P."/>
            <person name="Predki P."/>
            <person name="Quan G."/>
            <person name="Ramirez L."/>
            <person name="Rash S."/>
            <person name="Retterer J."/>
            <person name="Rodriguez A."/>
            <person name="Rogers S."/>
            <person name="Salamov A."/>
            <person name="Salazar A."/>
            <person name="She X."/>
            <person name="Smith D."/>
            <person name="Slezak T."/>
            <person name="Solovyev V."/>
            <person name="Thayer N."/>
            <person name="Tice H."/>
            <person name="Tsai M."/>
            <person name="Ustaszewska A."/>
            <person name="Vo N."/>
            <person name="Wagner M."/>
            <person name="Wheeler J."/>
            <person name="Wu K."/>
            <person name="Xie G."/>
            <person name="Yang J."/>
            <person name="Dubchak I."/>
            <person name="Furey T.S."/>
            <person name="DeJong P."/>
            <person name="Dickson M."/>
            <person name="Gordon D."/>
            <person name="Eichler E.E."/>
            <person name="Pennacchio L.A."/>
            <person name="Richardson P."/>
            <person name="Stubbs L."/>
            <person name="Rokhsar D.S."/>
            <person name="Myers R.M."/>
            <person name="Rubin E.M."/>
            <person name="Lucas S.M."/>
        </authorList>
    </citation>
    <scope>NUCLEOTIDE SEQUENCE [LARGE SCALE GENOMIC DNA]</scope>
</reference>
<reference key="9">
    <citation type="submission" date="2005-07" db="EMBL/GenBank/DDBJ databases">
        <authorList>
            <person name="Mural R.J."/>
            <person name="Istrail S."/>
            <person name="Sutton G.G."/>
            <person name="Florea L."/>
            <person name="Halpern A.L."/>
            <person name="Mobarry C.M."/>
            <person name="Lippert R."/>
            <person name="Walenz B."/>
            <person name="Shatkay H."/>
            <person name="Dew I."/>
            <person name="Miller J.R."/>
            <person name="Flanigan M.J."/>
            <person name="Edwards N.J."/>
            <person name="Bolanos R."/>
            <person name="Fasulo D."/>
            <person name="Halldorsson B.V."/>
            <person name="Hannenhalli S."/>
            <person name="Turner R."/>
            <person name="Yooseph S."/>
            <person name="Lu F."/>
            <person name="Nusskern D.R."/>
            <person name="Shue B.C."/>
            <person name="Zheng X.H."/>
            <person name="Zhong F."/>
            <person name="Delcher A.L."/>
            <person name="Huson D.H."/>
            <person name="Kravitz S.A."/>
            <person name="Mouchard L."/>
            <person name="Reinert K."/>
            <person name="Remington K.A."/>
            <person name="Clark A.G."/>
            <person name="Waterman M.S."/>
            <person name="Eichler E.E."/>
            <person name="Adams M.D."/>
            <person name="Hunkapiller M.W."/>
            <person name="Myers E.W."/>
            <person name="Venter J.C."/>
        </authorList>
    </citation>
    <scope>NUCLEOTIDE SEQUENCE [LARGE SCALE GENOMIC DNA]</scope>
</reference>
<reference key="10">
    <citation type="journal article" date="2004" name="Genome Res.">
        <title>The status, quality, and expansion of the NIH full-length cDNA project: the Mammalian Gene Collection (MGC).</title>
        <authorList>
            <consortium name="The MGC Project Team"/>
        </authorList>
    </citation>
    <scope>NUCLEOTIDE SEQUENCE [LARGE SCALE MRNA] (ISOFORM LONG)</scope>
    <source>
        <tissue>Brain</tissue>
        <tissue>Lung</tissue>
    </source>
</reference>
<reference key="11">
    <citation type="journal article" date="1995" name="FEBS Lett.">
        <title>Purification and characterization of human deoxyhypusine synthase from HeLa cells.</title>
        <authorList>
            <person name="Klier H."/>
            <person name="Csonga R."/>
            <person name="Steinkasserer A."/>
            <person name="Woehl T."/>
            <person name="Lottspeich F."/>
            <person name="Eder J."/>
        </authorList>
    </citation>
    <scope>PROTEIN SEQUENCE OF 184-189; 192-204; 206-232 AND 278-296 (ISOFORM LONG)</scope>
    <source>
        <tissue>Cervix carcinoma</tissue>
    </source>
</reference>
<reference key="12">
    <citation type="journal article" date="1997" name="J. Biol. Chem.">
        <title>Enzyme-substrate intermediate at a specific lysine residue is required for deoxyhypusine synthesis. The role of Lys329 in human deoxyhypusine synthase.</title>
        <authorList>
            <person name="Joe Y.A."/>
            <person name="Wolff E.C."/>
            <person name="Lee Y.B."/>
            <person name="Park M.H."/>
        </authorList>
    </citation>
    <scope>MUTAGENESIS OF LYS-287 AND LYS-329</scope>
    <scope>SUBUNIT</scope>
    <scope>ACTIVE SITE</scope>
</reference>
<reference key="13">
    <citation type="journal article" date="2001" name="Biochem. J.">
        <title>Structure-function studies of human deoxyhypusine synthase: identification of amino acid residues critical for the binding of spermidine and NAD.</title>
        <authorList>
            <person name="Lee C.H."/>
            <person name="Um P.Y."/>
            <person name="Park M.H."/>
        </authorList>
    </citation>
    <scope>MUTAGENESIS OF ASN-106; SER-109; GLU-137; ASP-238; ASP-243; HIS-288; TYR-305; ASP-313; ASP-316; SER-317; GLU-323; TRP-327 AND ASP-342</scope>
</reference>
<reference key="14">
    <citation type="journal article" date="2007" name="Science">
        <title>ATM and ATR substrate analysis reveals extensive protein networks responsive to DNA damage.</title>
        <authorList>
            <person name="Matsuoka S."/>
            <person name="Ballif B.A."/>
            <person name="Smogorzewska A."/>
            <person name="McDonald E.R. III"/>
            <person name="Hurov K.E."/>
            <person name="Luo J."/>
            <person name="Bakalarski C.E."/>
            <person name="Zhao Z."/>
            <person name="Solimini N."/>
            <person name="Lerenthal Y."/>
            <person name="Shiloh Y."/>
            <person name="Gygi S.P."/>
            <person name="Elledge S.J."/>
        </authorList>
    </citation>
    <scope>PHOSPHORYLATION [LARGE SCALE ANALYSIS] AT SER-78</scope>
    <scope>IDENTIFICATION BY MASS SPECTROMETRY [LARGE SCALE ANALYSIS]</scope>
    <source>
        <tissue>Embryonic kidney</tissue>
    </source>
</reference>
<reference key="15">
    <citation type="journal article" date="2010" name="Sci. Signal.">
        <title>Quantitative phosphoproteomics reveals widespread full phosphorylation site occupancy during mitosis.</title>
        <authorList>
            <person name="Olsen J.V."/>
            <person name="Vermeulen M."/>
            <person name="Santamaria A."/>
            <person name="Kumar C."/>
            <person name="Miller M.L."/>
            <person name="Jensen L.J."/>
            <person name="Gnad F."/>
            <person name="Cox J."/>
            <person name="Jensen T.S."/>
            <person name="Nigg E.A."/>
            <person name="Brunak S."/>
            <person name="Mann M."/>
        </authorList>
    </citation>
    <scope>PHOSPHORYLATION [LARGE SCALE ANALYSIS] AT SER-78</scope>
    <scope>IDENTIFICATION BY MASS SPECTROMETRY [LARGE SCALE ANALYSIS]</scope>
    <source>
        <tissue>Cervix carcinoma</tissue>
    </source>
</reference>
<reference key="16">
    <citation type="journal article" date="2011" name="BMC Syst. Biol.">
        <title>Initial characterization of the human central proteome.</title>
        <authorList>
            <person name="Burkard T.R."/>
            <person name="Planyavsky M."/>
            <person name="Kaupe I."/>
            <person name="Breitwieser F.P."/>
            <person name="Buerckstuemmer T."/>
            <person name="Bennett K.L."/>
            <person name="Superti-Furga G."/>
            <person name="Colinge J."/>
        </authorList>
    </citation>
    <scope>IDENTIFICATION BY MASS SPECTROMETRY [LARGE SCALE ANALYSIS]</scope>
</reference>
<reference key="17">
    <citation type="journal article" date="2019" name="Am. J. Hum. Genet.">
        <title>Recessive rare variants in deoxyhypusine synthase, an enzyme involved in the synthesis of hypusine, are associated with a neurodevelopmental disorder.</title>
        <authorList>
            <person name="Ganapathi M."/>
            <person name="Padgett L.R."/>
            <person name="Yamada K."/>
            <person name="Devinsky O."/>
            <person name="Willaert R."/>
            <person name="Person R."/>
            <person name="Au P.B."/>
            <person name="Tagoe J."/>
            <person name="McDonald M."/>
            <person name="Karlowicz D."/>
            <person name="Wolf B."/>
            <person name="Lee J."/>
            <person name="Shen Y."/>
            <person name="Okur V."/>
            <person name="Deng L."/>
            <person name="LeDuc C.A."/>
            <person name="Wang J."/>
            <person name="Hanner A."/>
            <person name="Mirmira R.G."/>
            <person name="Park M.H."/>
            <person name="Mastracci T.L."/>
            <person name="Chung W.K."/>
        </authorList>
    </citation>
    <scope>FUNCTION</scope>
    <scope>CATALYTIC ACTIVITY</scope>
    <scope>PATHWAY</scope>
    <scope>VARIANTS NEDSSWI SER-173 AND 305-TYR-ILE-306 DEL</scope>
    <scope>CHARACTERIZATION OF VARIANTS NEDSSWI SER-173 AND 305-TYR-ILE-306 DEL</scope>
    <scope>INVOLVEMENT IN NEDSSWI</scope>
</reference>
<reference key="18">
    <citation type="journal article" date="1998" name="Structure">
        <title>Crystal structure of the NAD complex of human deoxyhypusine synthase: an enzyme with a ball-and-chain mechanism for blocking the active site.</title>
        <authorList>
            <person name="Liao D.-I."/>
            <person name="Wolff E.C."/>
            <person name="Park M.H."/>
            <person name="Davies D.R."/>
        </authorList>
    </citation>
    <scope>X-RAY CRYSTALLOGRAPHY (2.2 ANGSTROMS) IN COMPLEX WITH NAD</scope>
    <scope>SUBUNIT</scope>
</reference>
<reference key="19">
    <citation type="journal article" date="2004" name="J. Biol. Chem.">
        <title>A new crystal structure of deoxyhypusine synthase reveals the configuration of the active enzyme and of an enzyme.NAD.inhibitor ternary complex.</title>
        <authorList>
            <person name="Umland T.C."/>
            <person name="Wolff E.C."/>
            <person name="Park M.H."/>
            <person name="Davies D.R."/>
        </authorList>
    </citation>
    <scope>X-RAY CRYSTALLOGRAPHY (2.15 ANGSTROMS) IN COMPLEXES WITH NAD AND COMPETITIVE INHIBITOR</scope>
    <scope>IDENTIFICATION BY MASS SPECTROMETRY</scope>
    <scope>SUBUNIT</scope>
</reference>